<evidence type="ECO:0000255" key="1">
    <source>
        <dbReference type="HAMAP-Rule" id="MF_01147"/>
    </source>
</evidence>
<proteinExistence type="inferred from homology"/>
<sequence length="315" mass="35441">MNLAYIPSPTFSKFEIGPFTIHMYAICILIGICVAVWILTTRWKRYGGTFDQILDTTLVTVPCALVGARLYHCITTPADYFPPTGNLVNILKVWEGGMAIFGGISVGTLVAFLWCRHKHYPFAIFADAIAPALPVAQAIGRLGNWFNQELYGWPTTLPWGLKLNDADAIGKSEICYSGAQCPDYRTTLFHPTFLYEMIWNLIGAALIIYLGHKLADRLKAGQQFAMYLMWYGLGRTWIENVRINYSTVILGLRTNVWTAIIVFVLGCILFVVLYQYGPDPKAQARGLAAVTADELERQSIEEEQLRQKKQAKRTK</sequence>
<accession>B3DS08</accession>
<feature type="chain" id="PRO_1000137404" description="Phosphatidylglycerol--prolipoprotein diacylglyceryl transferase">
    <location>
        <begin position="1"/>
        <end position="315"/>
    </location>
</feature>
<feature type="transmembrane region" description="Helical" evidence="1">
    <location>
        <begin position="19"/>
        <end position="39"/>
    </location>
</feature>
<feature type="transmembrane region" description="Helical" evidence="1">
    <location>
        <begin position="93"/>
        <end position="113"/>
    </location>
</feature>
<feature type="transmembrane region" description="Helical" evidence="1">
    <location>
        <begin position="188"/>
        <end position="208"/>
    </location>
</feature>
<feature type="transmembrane region" description="Helical" evidence="1">
    <location>
        <begin position="256"/>
        <end position="276"/>
    </location>
</feature>
<feature type="binding site" evidence="1">
    <location>
        <position position="141"/>
    </location>
    <ligand>
        <name>a 1,2-diacyl-sn-glycero-3-phospho-(1'-sn-glycerol)</name>
        <dbReference type="ChEBI" id="CHEBI:64716"/>
    </ligand>
</feature>
<organism>
    <name type="scientific">Bifidobacterium longum (strain DJO10A)</name>
    <dbReference type="NCBI Taxonomy" id="205913"/>
    <lineage>
        <taxon>Bacteria</taxon>
        <taxon>Bacillati</taxon>
        <taxon>Actinomycetota</taxon>
        <taxon>Actinomycetes</taxon>
        <taxon>Bifidobacteriales</taxon>
        <taxon>Bifidobacteriaceae</taxon>
        <taxon>Bifidobacterium</taxon>
    </lineage>
</organism>
<keyword id="KW-1003">Cell membrane</keyword>
<keyword id="KW-0472">Membrane</keyword>
<keyword id="KW-0808">Transferase</keyword>
<keyword id="KW-0812">Transmembrane</keyword>
<keyword id="KW-1133">Transmembrane helix</keyword>
<protein>
    <recommendedName>
        <fullName evidence="1">Phosphatidylglycerol--prolipoprotein diacylglyceryl transferase</fullName>
        <ecNumber evidence="1">2.5.1.145</ecNumber>
    </recommendedName>
</protein>
<comment type="function">
    <text evidence="1">Catalyzes the transfer of the diacylglyceryl group from phosphatidylglycerol to the sulfhydryl group of the N-terminal cysteine of a prolipoprotein, the first step in the formation of mature lipoproteins.</text>
</comment>
<comment type="catalytic activity">
    <reaction evidence="1">
        <text>L-cysteinyl-[prolipoprotein] + a 1,2-diacyl-sn-glycero-3-phospho-(1'-sn-glycerol) = an S-1,2-diacyl-sn-glyceryl-L-cysteinyl-[prolipoprotein] + sn-glycerol 1-phosphate + H(+)</text>
        <dbReference type="Rhea" id="RHEA:56712"/>
        <dbReference type="Rhea" id="RHEA-COMP:14679"/>
        <dbReference type="Rhea" id="RHEA-COMP:14680"/>
        <dbReference type="ChEBI" id="CHEBI:15378"/>
        <dbReference type="ChEBI" id="CHEBI:29950"/>
        <dbReference type="ChEBI" id="CHEBI:57685"/>
        <dbReference type="ChEBI" id="CHEBI:64716"/>
        <dbReference type="ChEBI" id="CHEBI:140658"/>
        <dbReference type="EC" id="2.5.1.145"/>
    </reaction>
</comment>
<comment type="pathway">
    <text evidence="1">Protein modification; lipoprotein biosynthesis (diacylglyceryl transfer).</text>
</comment>
<comment type="subcellular location">
    <subcellularLocation>
        <location evidence="1">Cell membrane</location>
        <topology evidence="1">Multi-pass membrane protein</topology>
    </subcellularLocation>
</comment>
<comment type="similarity">
    <text evidence="1">Belongs to the Lgt family.</text>
</comment>
<reference key="1">
    <citation type="journal article" date="2008" name="BMC Genomics">
        <title>Comparative genomic analysis of the gut bacterium Bifidobacterium longum reveals loci susceptible to deletion during pure culture growth.</title>
        <authorList>
            <person name="Lee J.H."/>
            <person name="Karamychev V.N."/>
            <person name="Kozyavkin S.A."/>
            <person name="Mills D."/>
            <person name="Pavlov A.R."/>
            <person name="Pavlova N.V."/>
            <person name="Polouchine N.N."/>
            <person name="Richardson P.M."/>
            <person name="Shakhova V.V."/>
            <person name="Slesarev A.I."/>
            <person name="Weimer B."/>
            <person name="O'Sullivan D.J."/>
        </authorList>
    </citation>
    <scope>NUCLEOTIDE SEQUENCE [LARGE SCALE GENOMIC DNA]</scope>
    <source>
        <strain>DJO10A</strain>
    </source>
</reference>
<dbReference type="EC" id="2.5.1.145" evidence="1"/>
<dbReference type="EMBL" id="CP000605">
    <property type="protein sequence ID" value="ACD97927.1"/>
    <property type="molecule type" value="Genomic_DNA"/>
</dbReference>
<dbReference type="RefSeq" id="WP_010080647.1">
    <property type="nucleotide sequence ID" value="NZ_AABM02000001.1"/>
</dbReference>
<dbReference type="SMR" id="B3DS08"/>
<dbReference type="KEGG" id="blj:BLD_0481"/>
<dbReference type="HOGENOM" id="CLU_013386_2_0_11"/>
<dbReference type="UniPathway" id="UPA00664"/>
<dbReference type="Proteomes" id="UP000002419">
    <property type="component" value="Chromosome"/>
</dbReference>
<dbReference type="GO" id="GO:0005886">
    <property type="term" value="C:plasma membrane"/>
    <property type="evidence" value="ECO:0007669"/>
    <property type="project" value="UniProtKB-SubCell"/>
</dbReference>
<dbReference type="GO" id="GO:0008961">
    <property type="term" value="F:phosphatidylglycerol-prolipoprotein diacylglyceryl transferase activity"/>
    <property type="evidence" value="ECO:0007669"/>
    <property type="project" value="UniProtKB-UniRule"/>
</dbReference>
<dbReference type="GO" id="GO:0042158">
    <property type="term" value="P:lipoprotein biosynthetic process"/>
    <property type="evidence" value="ECO:0007669"/>
    <property type="project" value="UniProtKB-UniRule"/>
</dbReference>
<dbReference type="HAMAP" id="MF_01147">
    <property type="entry name" value="Lgt"/>
    <property type="match status" value="1"/>
</dbReference>
<dbReference type="InterPro" id="IPR001640">
    <property type="entry name" value="Lgt"/>
</dbReference>
<dbReference type="NCBIfam" id="TIGR00544">
    <property type="entry name" value="lgt"/>
    <property type="match status" value="1"/>
</dbReference>
<dbReference type="PANTHER" id="PTHR30589:SF0">
    <property type="entry name" value="PHOSPHATIDYLGLYCEROL--PROLIPOPROTEIN DIACYLGLYCERYL TRANSFERASE"/>
    <property type="match status" value="1"/>
</dbReference>
<dbReference type="PANTHER" id="PTHR30589">
    <property type="entry name" value="PROLIPOPROTEIN DIACYLGLYCERYL TRANSFERASE"/>
    <property type="match status" value="1"/>
</dbReference>
<dbReference type="Pfam" id="PF01790">
    <property type="entry name" value="LGT"/>
    <property type="match status" value="1"/>
</dbReference>
<dbReference type="PROSITE" id="PS01311">
    <property type="entry name" value="LGT"/>
    <property type="match status" value="1"/>
</dbReference>
<gene>
    <name evidence="1" type="primary">lgt</name>
    <name type="ordered locus">BLD_0481</name>
</gene>
<name>LGT_BIFLD</name>